<sequence>MAQKDVLTDLTKVRNIGIMAHIDAGKTTTTERILYYTGISYKIGEVHDGAATMDWMEQEQERGITITSAATTCFWNDNQINIIDTPGHVDFTVEVERSLRVLDGAVAVFDGKEGVEPQSEQVWRQADKYEVPRICFVNKMDKIGADFYFSVRTMQERLGANVIPIQLPVGSEGDFEGVVDLVEMKAKVWSTEAKLGEKYDVVGIPTDLQEKAEEYRTNLLETVAETDEALLEKYFSGEELTVAEIKGAIRKLTISSEAYPVLCGSAFKNKGVQPMLDAVIDYLPSPLDVPAAIGHVPGKEDEEIVRKPSTDEPLSALAFKVATHPFFGKLTYVRVYSGKVDSGSQVINATKGKKERLGKLFQMHSNKENPVETASAGHIYAVIGLKDTTTGDTLADPNNQIVLESMTFPDPVIEVAIEPKTKSDQEKLSLSIQKLAEEDPTFKVHLDSETGQTVIGGMGELHLDILVDRMRREFKVEANVGKPQVAYKETIRRVVETVEYTHKKQTGGSGQFAKVIIKLEPFSGENGATYEFENKVTGGRIPREYIPSVEAGARDAMQYGVLAGYPLVNLKVTLLDGAYHDVDSSEIAFKIAGSQVLKKAAAQAQPVILEPIMAVEVTTPEDYMGDVIGDLHSRRGQIQAMKERAGTRVVRAHVPLSEMFGYVGDLRSKTQGRANYSMVFNSYSEVPANVSKEIIAKATGE</sequence>
<feature type="chain" id="PRO_0000091158" description="Elongation factor G">
    <location>
        <begin position="1"/>
        <end position="701"/>
    </location>
</feature>
<feature type="domain" description="tr-type G">
    <location>
        <begin position="11"/>
        <end position="287"/>
    </location>
</feature>
<feature type="binding site" evidence="1">
    <location>
        <begin position="20"/>
        <end position="27"/>
    </location>
    <ligand>
        <name>GTP</name>
        <dbReference type="ChEBI" id="CHEBI:37565"/>
    </ligand>
</feature>
<feature type="binding site" evidence="1">
    <location>
        <begin position="84"/>
        <end position="88"/>
    </location>
    <ligand>
        <name>GTP</name>
        <dbReference type="ChEBI" id="CHEBI:37565"/>
    </ligand>
</feature>
<feature type="binding site" evidence="1">
    <location>
        <begin position="138"/>
        <end position="141"/>
    </location>
    <ligand>
        <name>GTP</name>
        <dbReference type="ChEBI" id="CHEBI:37565"/>
    </ligand>
</feature>
<feature type="sequence conflict" description="In Ref. 1; CAA78673." evidence="2" ref="1">
    <original>G</original>
    <variation>A</variation>
    <location>
        <position position="564"/>
    </location>
</feature>
<organism>
    <name type="scientific">Mycobacterium leprae (strain TN)</name>
    <dbReference type="NCBI Taxonomy" id="272631"/>
    <lineage>
        <taxon>Bacteria</taxon>
        <taxon>Bacillati</taxon>
        <taxon>Actinomycetota</taxon>
        <taxon>Actinomycetes</taxon>
        <taxon>Mycobacteriales</taxon>
        <taxon>Mycobacteriaceae</taxon>
        <taxon>Mycobacterium</taxon>
    </lineage>
</organism>
<proteinExistence type="inferred from homology"/>
<reference key="1">
    <citation type="journal article" date="1993" name="Mol. Microbiol.">
        <title>Nucleotide sequence of the first cosmid from the Mycobacterium leprae genome project: structure and function of the Rif-Str regions.</title>
        <authorList>
            <person name="Honore N.T."/>
            <person name="Bergh S."/>
            <person name="Chanteau S."/>
            <person name="Doucet-Populaire F."/>
            <person name="Eiglmeier K."/>
            <person name="Garnier T."/>
            <person name="Georges C."/>
            <person name="Launois P."/>
            <person name="Limpaiboon T."/>
            <person name="Newton S."/>
            <person name="Niang K."/>
            <person name="del Portillo P."/>
            <person name="Ramesh G.R."/>
            <person name="Reddi P."/>
            <person name="Ridel P.R."/>
            <person name="Sittisombut N."/>
            <person name="Wu-Hunter S."/>
            <person name="Cole S.T."/>
        </authorList>
    </citation>
    <scope>NUCLEOTIDE SEQUENCE [GENOMIC DNA]</scope>
</reference>
<reference key="2">
    <citation type="journal article" date="2001" name="Nature">
        <title>Massive gene decay in the leprosy bacillus.</title>
        <authorList>
            <person name="Cole S.T."/>
            <person name="Eiglmeier K."/>
            <person name="Parkhill J."/>
            <person name="James K.D."/>
            <person name="Thomson N.R."/>
            <person name="Wheeler P.R."/>
            <person name="Honore N."/>
            <person name="Garnier T."/>
            <person name="Churcher C.M."/>
            <person name="Harris D.E."/>
            <person name="Mungall K.L."/>
            <person name="Basham D."/>
            <person name="Brown D."/>
            <person name="Chillingworth T."/>
            <person name="Connor R."/>
            <person name="Davies R.M."/>
            <person name="Devlin K."/>
            <person name="Duthoy S."/>
            <person name="Feltwell T."/>
            <person name="Fraser A."/>
            <person name="Hamlin N."/>
            <person name="Holroyd S."/>
            <person name="Hornsby T."/>
            <person name="Jagels K."/>
            <person name="Lacroix C."/>
            <person name="Maclean J."/>
            <person name="Moule S."/>
            <person name="Murphy L.D."/>
            <person name="Oliver K."/>
            <person name="Quail M.A."/>
            <person name="Rajandream M.A."/>
            <person name="Rutherford K.M."/>
            <person name="Rutter S."/>
            <person name="Seeger K."/>
            <person name="Simon S."/>
            <person name="Simmonds M."/>
            <person name="Skelton J."/>
            <person name="Squares R."/>
            <person name="Squares S."/>
            <person name="Stevens K."/>
            <person name="Taylor K."/>
            <person name="Whitehead S."/>
            <person name="Woodward J.R."/>
            <person name="Barrell B.G."/>
        </authorList>
    </citation>
    <scope>NUCLEOTIDE SEQUENCE [LARGE SCALE GENOMIC DNA]</scope>
    <source>
        <strain>TN</strain>
    </source>
</reference>
<protein>
    <recommendedName>
        <fullName>Elongation factor G</fullName>
        <shortName>EF-G</shortName>
    </recommendedName>
</protein>
<name>EFG_MYCLE</name>
<evidence type="ECO:0000250" key="1"/>
<evidence type="ECO:0000305" key="2"/>
<accession>P30767</accession>
<comment type="function">
    <text evidence="1">Catalyzes the GTP-dependent ribosomal translocation step during translation elongation. During this step, the ribosome changes from the pre-translocational (PRE) to the post-translocational (POST) state as the newly formed A-site-bound peptidyl-tRNA and P-site-bound deacylated tRNA move to the P and E sites, respectively. Catalyzes the coordinated movement of the two tRNA molecules, the mRNA and conformational changes in the ribosome (By similarity).</text>
</comment>
<comment type="subcellular location">
    <subcellularLocation>
        <location evidence="1">Cytoplasm</location>
    </subcellularLocation>
</comment>
<comment type="similarity">
    <text evidence="2">Belongs to the TRAFAC class translation factor GTPase superfamily. Classic translation factor GTPase family. EF-G/EF-2 subfamily.</text>
</comment>
<gene>
    <name type="primary">fusA</name>
    <name type="synonym">efg</name>
    <name type="ordered locus">ML1878</name>
</gene>
<keyword id="KW-0963">Cytoplasm</keyword>
<keyword id="KW-0251">Elongation factor</keyword>
<keyword id="KW-0342">GTP-binding</keyword>
<keyword id="KW-0547">Nucleotide-binding</keyword>
<keyword id="KW-0648">Protein biosynthesis</keyword>
<keyword id="KW-1185">Reference proteome</keyword>
<dbReference type="EMBL" id="Z14314">
    <property type="protein sequence ID" value="CAA78673.1"/>
    <property type="molecule type" value="Genomic_DNA"/>
</dbReference>
<dbReference type="EMBL" id="AL583923">
    <property type="protein sequence ID" value="CAC30832.1"/>
    <property type="molecule type" value="Genomic_DNA"/>
</dbReference>
<dbReference type="PIR" id="H87143">
    <property type="entry name" value="H87143"/>
</dbReference>
<dbReference type="PIR" id="S31150">
    <property type="entry name" value="S31150"/>
</dbReference>
<dbReference type="RefSeq" id="NP_302268.1">
    <property type="nucleotide sequence ID" value="NC_002677.1"/>
</dbReference>
<dbReference type="RefSeq" id="WP_010908589.1">
    <property type="nucleotide sequence ID" value="NC_002677.1"/>
</dbReference>
<dbReference type="SMR" id="P30767"/>
<dbReference type="STRING" id="272631.gene:17575726"/>
<dbReference type="KEGG" id="mle:ML1878"/>
<dbReference type="PATRIC" id="fig|272631.5.peg.3552"/>
<dbReference type="Leproma" id="ML1878"/>
<dbReference type="eggNOG" id="COG0480">
    <property type="taxonomic scope" value="Bacteria"/>
</dbReference>
<dbReference type="HOGENOM" id="CLU_002794_4_1_11"/>
<dbReference type="OrthoDB" id="9801472at2"/>
<dbReference type="Proteomes" id="UP000000806">
    <property type="component" value="Chromosome"/>
</dbReference>
<dbReference type="GO" id="GO:0005737">
    <property type="term" value="C:cytoplasm"/>
    <property type="evidence" value="ECO:0007669"/>
    <property type="project" value="UniProtKB-SubCell"/>
</dbReference>
<dbReference type="GO" id="GO:0005525">
    <property type="term" value="F:GTP binding"/>
    <property type="evidence" value="ECO:0007669"/>
    <property type="project" value="UniProtKB-UniRule"/>
</dbReference>
<dbReference type="GO" id="GO:0003924">
    <property type="term" value="F:GTPase activity"/>
    <property type="evidence" value="ECO:0007669"/>
    <property type="project" value="InterPro"/>
</dbReference>
<dbReference type="GO" id="GO:0003746">
    <property type="term" value="F:translation elongation factor activity"/>
    <property type="evidence" value="ECO:0007669"/>
    <property type="project" value="UniProtKB-UniRule"/>
</dbReference>
<dbReference type="GO" id="GO:0032790">
    <property type="term" value="P:ribosome disassembly"/>
    <property type="evidence" value="ECO:0007669"/>
    <property type="project" value="TreeGrafter"/>
</dbReference>
<dbReference type="CDD" id="cd01886">
    <property type="entry name" value="EF-G"/>
    <property type="match status" value="1"/>
</dbReference>
<dbReference type="CDD" id="cd16262">
    <property type="entry name" value="EFG_III"/>
    <property type="match status" value="1"/>
</dbReference>
<dbReference type="CDD" id="cd01434">
    <property type="entry name" value="EFG_mtEFG1_IV"/>
    <property type="match status" value="1"/>
</dbReference>
<dbReference type="CDD" id="cd03713">
    <property type="entry name" value="EFG_mtEFG_C"/>
    <property type="match status" value="1"/>
</dbReference>
<dbReference type="CDD" id="cd04088">
    <property type="entry name" value="EFG_mtEFG_II"/>
    <property type="match status" value="1"/>
</dbReference>
<dbReference type="FunFam" id="2.40.30.10:FF:000006">
    <property type="entry name" value="Elongation factor G"/>
    <property type="match status" value="1"/>
</dbReference>
<dbReference type="FunFam" id="3.30.230.10:FF:000003">
    <property type="entry name" value="Elongation factor G"/>
    <property type="match status" value="1"/>
</dbReference>
<dbReference type="FunFam" id="3.30.70.240:FF:000001">
    <property type="entry name" value="Elongation factor G"/>
    <property type="match status" value="1"/>
</dbReference>
<dbReference type="FunFam" id="3.30.70.870:FF:000001">
    <property type="entry name" value="Elongation factor G"/>
    <property type="match status" value="1"/>
</dbReference>
<dbReference type="FunFam" id="3.40.50.300:FF:000029">
    <property type="entry name" value="Elongation factor G"/>
    <property type="match status" value="1"/>
</dbReference>
<dbReference type="Gene3D" id="3.30.230.10">
    <property type="match status" value="1"/>
</dbReference>
<dbReference type="Gene3D" id="3.30.70.240">
    <property type="match status" value="1"/>
</dbReference>
<dbReference type="Gene3D" id="3.30.70.870">
    <property type="entry name" value="Elongation Factor G (Translational Gtpase), domain 3"/>
    <property type="match status" value="1"/>
</dbReference>
<dbReference type="Gene3D" id="3.40.50.300">
    <property type="entry name" value="P-loop containing nucleotide triphosphate hydrolases"/>
    <property type="match status" value="1"/>
</dbReference>
<dbReference type="Gene3D" id="2.40.30.10">
    <property type="entry name" value="Translation factors"/>
    <property type="match status" value="1"/>
</dbReference>
<dbReference type="HAMAP" id="MF_00054_B">
    <property type="entry name" value="EF_G_EF_2_B"/>
    <property type="match status" value="1"/>
</dbReference>
<dbReference type="InterPro" id="IPR041095">
    <property type="entry name" value="EFG_II"/>
</dbReference>
<dbReference type="InterPro" id="IPR009022">
    <property type="entry name" value="EFG_III"/>
</dbReference>
<dbReference type="InterPro" id="IPR035647">
    <property type="entry name" value="EFG_III/V"/>
</dbReference>
<dbReference type="InterPro" id="IPR047872">
    <property type="entry name" value="EFG_IV"/>
</dbReference>
<dbReference type="InterPro" id="IPR035649">
    <property type="entry name" value="EFG_V"/>
</dbReference>
<dbReference type="InterPro" id="IPR000640">
    <property type="entry name" value="EFG_V-like"/>
</dbReference>
<dbReference type="InterPro" id="IPR004161">
    <property type="entry name" value="EFTu-like_2"/>
</dbReference>
<dbReference type="InterPro" id="IPR031157">
    <property type="entry name" value="G_TR_CS"/>
</dbReference>
<dbReference type="InterPro" id="IPR027417">
    <property type="entry name" value="P-loop_NTPase"/>
</dbReference>
<dbReference type="InterPro" id="IPR020568">
    <property type="entry name" value="Ribosomal_Su5_D2-typ_SF"/>
</dbReference>
<dbReference type="InterPro" id="IPR014721">
    <property type="entry name" value="Ribsml_uS5_D2-typ_fold_subgr"/>
</dbReference>
<dbReference type="InterPro" id="IPR005225">
    <property type="entry name" value="Small_GTP-bd"/>
</dbReference>
<dbReference type="InterPro" id="IPR000795">
    <property type="entry name" value="T_Tr_GTP-bd_dom"/>
</dbReference>
<dbReference type="InterPro" id="IPR009000">
    <property type="entry name" value="Transl_B-barrel_sf"/>
</dbReference>
<dbReference type="InterPro" id="IPR004540">
    <property type="entry name" value="Transl_elong_EFG/EF2"/>
</dbReference>
<dbReference type="InterPro" id="IPR005517">
    <property type="entry name" value="Transl_elong_EFG/EF2_IV"/>
</dbReference>
<dbReference type="NCBIfam" id="TIGR00484">
    <property type="entry name" value="EF-G"/>
    <property type="match status" value="1"/>
</dbReference>
<dbReference type="NCBIfam" id="NF009381">
    <property type="entry name" value="PRK12740.1-5"/>
    <property type="match status" value="1"/>
</dbReference>
<dbReference type="NCBIfam" id="TIGR00231">
    <property type="entry name" value="small_GTP"/>
    <property type="match status" value="1"/>
</dbReference>
<dbReference type="PANTHER" id="PTHR43261:SF1">
    <property type="entry name" value="RIBOSOME-RELEASING FACTOR 2, MITOCHONDRIAL"/>
    <property type="match status" value="1"/>
</dbReference>
<dbReference type="PANTHER" id="PTHR43261">
    <property type="entry name" value="TRANSLATION ELONGATION FACTOR G-RELATED"/>
    <property type="match status" value="1"/>
</dbReference>
<dbReference type="Pfam" id="PF00679">
    <property type="entry name" value="EFG_C"/>
    <property type="match status" value="1"/>
</dbReference>
<dbReference type="Pfam" id="PF14492">
    <property type="entry name" value="EFG_III"/>
    <property type="match status" value="1"/>
</dbReference>
<dbReference type="Pfam" id="PF03764">
    <property type="entry name" value="EFG_IV"/>
    <property type="match status" value="1"/>
</dbReference>
<dbReference type="Pfam" id="PF00009">
    <property type="entry name" value="GTP_EFTU"/>
    <property type="match status" value="1"/>
</dbReference>
<dbReference type="Pfam" id="PF03144">
    <property type="entry name" value="GTP_EFTU_D2"/>
    <property type="match status" value="1"/>
</dbReference>
<dbReference type="PRINTS" id="PR00315">
    <property type="entry name" value="ELONGATNFCT"/>
</dbReference>
<dbReference type="SMART" id="SM00838">
    <property type="entry name" value="EFG_C"/>
    <property type="match status" value="1"/>
</dbReference>
<dbReference type="SMART" id="SM00889">
    <property type="entry name" value="EFG_IV"/>
    <property type="match status" value="1"/>
</dbReference>
<dbReference type="SUPFAM" id="SSF54980">
    <property type="entry name" value="EF-G C-terminal domain-like"/>
    <property type="match status" value="2"/>
</dbReference>
<dbReference type="SUPFAM" id="SSF52540">
    <property type="entry name" value="P-loop containing nucleoside triphosphate hydrolases"/>
    <property type="match status" value="1"/>
</dbReference>
<dbReference type="SUPFAM" id="SSF54211">
    <property type="entry name" value="Ribosomal protein S5 domain 2-like"/>
    <property type="match status" value="1"/>
</dbReference>
<dbReference type="SUPFAM" id="SSF50447">
    <property type="entry name" value="Translation proteins"/>
    <property type="match status" value="1"/>
</dbReference>
<dbReference type="PROSITE" id="PS00301">
    <property type="entry name" value="G_TR_1"/>
    <property type="match status" value="1"/>
</dbReference>
<dbReference type="PROSITE" id="PS51722">
    <property type="entry name" value="G_TR_2"/>
    <property type="match status" value="1"/>
</dbReference>